<accession>A9M5C2</accession>
<feature type="chain" id="PRO_1000080882" description="ATP-dependent Clp protease proteolytic subunit">
    <location>
        <begin position="1"/>
        <end position="209"/>
    </location>
</feature>
<feature type="active site" description="Nucleophile" evidence="1">
    <location>
        <position position="106"/>
    </location>
</feature>
<feature type="active site" evidence="1">
    <location>
        <position position="131"/>
    </location>
</feature>
<name>CLPP_BRUC2</name>
<evidence type="ECO:0000255" key="1">
    <source>
        <dbReference type="HAMAP-Rule" id="MF_00444"/>
    </source>
</evidence>
<comment type="function">
    <text evidence="1">Cleaves peptides in various proteins in a process that requires ATP hydrolysis. Has a chymotrypsin-like activity. Plays a major role in the degradation of misfolded proteins.</text>
</comment>
<comment type="catalytic activity">
    <reaction evidence="1">
        <text>Hydrolysis of proteins to small peptides in the presence of ATP and magnesium. alpha-casein is the usual test substrate. In the absence of ATP, only oligopeptides shorter than five residues are hydrolyzed (such as succinyl-Leu-Tyr-|-NHMec, and Leu-Tyr-Leu-|-Tyr-Trp, in which cleavage of the -Tyr-|-Leu- and -Tyr-|-Trp bonds also occurs).</text>
        <dbReference type="EC" id="3.4.21.92"/>
    </reaction>
</comment>
<comment type="subunit">
    <text evidence="1">Fourteen ClpP subunits assemble into 2 heptameric rings which stack back to back to give a disk-like structure with a central cavity, resembling the structure of eukaryotic proteasomes.</text>
</comment>
<comment type="subcellular location">
    <subcellularLocation>
        <location evidence="1">Cytoplasm</location>
    </subcellularLocation>
</comment>
<comment type="similarity">
    <text evidence="1">Belongs to the peptidase S14 family.</text>
</comment>
<sequence length="209" mass="23424">MRDPIETVMNLVPMVVEQTNRGERAYDIFSRLLKERIIFVNGPVEDGMSMLVCAQLLFLEAENPKKEINMYINSPGGVVTSGMAIYDTMQFIRPPVSTLCMGQAASMGSLLLTAGATGHRYALPNARIMVHQPSGGFQGQASDIERHAQDIIKMKRRLNEIYVKHTGRDYDTIERTLDRDHFMTAQEALEFGLIDKVVEARDVSADESK</sequence>
<dbReference type="EC" id="3.4.21.92" evidence="1"/>
<dbReference type="EMBL" id="CP000872">
    <property type="protein sequence ID" value="ABX62177.1"/>
    <property type="molecule type" value="Genomic_DNA"/>
</dbReference>
<dbReference type="RefSeq" id="WP_002964237.1">
    <property type="nucleotide sequence ID" value="NC_010103.1"/>
</dbReference>
<dbReference type="SMR" id="A9M5C2"/>
<dbReference type="MEROPS" id="S14.001"/>
<dbReference type="KEGG" id="bcs:BCAN_A1128"/>
<dbReference type="HOGENOM" id="CLU_058707_3_2_5"/>
<dbReference type="PhylomeDB" id="A9M5C2"/>
<dbReference type="PRO" id="PR:A9M5C2"/>
<dbReference type="Proteomes" id="UP000001385">
    <property type="component" value="Chromosome I"/>
</dbReference>
<dbReference type="GO" id="GO:0005737">
    <property type="term" value="C:cytoplasm"/>
    <property type="evidence" value="ECO:0007669"/>
    <property type="project" value="UniProtKB-SubCell"/>
</dbReference>
<dbReference type="GO" id="GO:0009368">
    <property type="term" value="C:endopeptidase Clp complex"/>
    <property type="evidence" value="ECO:0007669"/>
    <property type="project" value="TreeGrafter"/>
</dbReference>
<dbReference type="GO" id="GO:0004176">
    <property type="term" value="F:ATP-dependent peptidase activity"/>
    <property type="evidence" value="ECO:0007669"/>
    <property type="project" value="InterPro"/>
</dbReference>
<dbReference type="GO" id="GO:0051117">
    <property type="term" value="F:ATPase binding"/>
    <property type="evidence" value="ECO:0007669"/>
    <property type="project" value="TreeGrafter"/>
</dbReference>
<dbReference type="GO" id="GO:0004252">
    <property type="term" value="F:serine-type endopeptidase activity"/>
    <property type="evidence" value="ECO:0007669"/>
    <property type="project" value="UniProtKB-UniRule"/>
</dbReference>
<dbReference type="GO" id="GO:0006515">
    <property type="term" value="P:protein quality control for misfolded or incompletely synthesized proteins"/>
    <property type="evidence" value="ECO:0007669"/>
    <property type="project" value="TreeGrafter"/>
</dbReference>
<dbReference type="CDD" id="cd07017">
    <property type="entry name" value="S14_ClpP_2"/>
    <property type="match status" value="1"/>
</dbReference>
<dbReference type="FunFam" id="3.90.226.10:FF:000001">
    <property type="entry name" value="ATP-dependent Clp protease proteolytic subunit"/>
    <property type="match status" value="1"/>
</dbReference>
<dbReference type="Gene3D" id="3.90.226.10">
    <property type="entry name" value="2-enoyl-CoA Hydratase, Chain A, domain 1"/>
    <property type="match status" value="1"/>
</dbReference>
<dbReference type="HAMAP" id="MF_00444">
    <property type="entry name" value="ClpP"/>
    <property type="match status" value="1"/>
</dbReference>
<dbReference type="InterPro" id="IPR001907">
    <property type="entry name" value="ClpP"/>
</dbReference>
<dbReference type="InterPro" id="IPR029045">
    <property type="entry name" value="ClpP/crotonase-like_dom_sf"/>
</dbReference>
<dbReference type="InterPro" id="IPR023562">
    <property type="entry name" value="ClpP/TepA"/>
</dbReference>
<dbReference type="InterPro" id="IPR033135">
    <property type="entry name" value="ClpP_His_AS"/>
</dbReference>
<dbReference type="InterPro" id="IPR018215">
    <property type="entry name" value="ClpP_Ser_AS"/>
</dbReference>
<dbReference type="NCBIfam" id="NF001368">
    <property type="entry name" value="PRK00277.1"/>
    <property type="match status" value="1"/>
</dbReference>
<dbReference type="NCBIfam" id="NF009205">
    <property type="entry name" value="PRK12553.1"/>
    <property type="match status" value="1"/>
</dbReference>
<dbReference type="PANTHER" id="PTHR10381">
    <property type="entry name" value="ATP-DEPENDENT CLP PROTEASE PROTEOLYTIC SUBUNIT"/>
    <property type="match status" value="1"/>
</dbReference>
<dbReference type="PANTHER" id="PTHR10381:SF70">
    <property type="entry name" value="ATP-DEPENDENT CLP PROTEASE PROTEOLYTIC SUBUNIT"/>
    <property type="match status" value="1"/>
</dbReference>
<dbReference type="Pfam" id="PF00574">
    <property type="entry name" value="CLP_protease"/>
    <property type="match status" value="1"/>
</dbReference>
<dbReference type="PRINTS" id="PR00127">
    <property type="entry name" value="CLPPROTEASEP"/>
</dbReference>
<dbReference type="SUPFAM" id="SSF52096">
    <property type="entry name" value="ClpP/crotonase"/>
    <property type="match status" value="1"/>
</dbReference>
<dbReference type="PROSITE" id="PS00382">
    <property type="entry name" value="CLP_PROTEASE_HIS"/>
    <property type="match status" value="1"/>
</dbReference>
<dbReference type="PROSITE" id="PS00381">
    <property type="entry name" value="CLP_PROTEASE_SER"/>
    <property type="match status" value="1"/>
</dbReference>
<protein>
    <recommendedName>
        <fullName evidence="1">ATP-dependent Clp protease proteolytic subunit</fullName>
        <ecNumber evidence="1">3.4.21.92</ecNumber>
    </recommendedName>
    <alternativeName>
        <fullName evidence="1">Endopeptidase Clp</fullName>
    </alternativeName>
</protein>
<proteinExistence type="inferred from homology"/>
<organism>
    <name type="scientific">Brucella canis (strain ATCC 23365 / NCTC 10854 / RM-666)</name>
    <dbReference type="NCBI Taxonomy" id="483179"/>
    <lineage>
        <taxon>Bacteria</taxon>
        <taxon>Pseudomonadati</taxon>
        <taxon>Pseudomonadota</taxon>
        <taxon>Alphaproteobacteria</taxon>
        <taxon>Hyphomicrobiales</taxon>
        <taxon>Brucellaceae</taxon>
        <taxon>Brucella/Ochrobactrum group</taxon>
        <taxon>Brucella</taxon>
    </lineage>
</organism>
<keyword id="KW-0963">Cytoplasm</keyword>
<keyword id="KW-0378">Hydrolase</keyword>
<keyword id="KW-0645">Protease</keyword>
<keyword id="KW-1185">Reference proteome</keyword>
<keyword id="KW-0720">Serine protease</keyword>
<gene>
    <name evidence="1" type="primary">clpP</name>
    <name type="ordered locus">BCAN_A1128</name>
</gene>
<reference key="1">
    <citation type="submission" date="2007-10" db="EMBL/GenBank/DDBJ databases">
        <title>Brucella canis ATCC 23365 whole genome shotgun sequencing project.</title>
        <authorList>
            <person name="Setubal J.C."/>
            <person name="Bowns C."/>
            <person name="Boyle S."/>
            <person name="Crasta O.R."/>
            <person name="Czar M.J."/>
            <person name="Dharmanolla C."/>
            <person name="Gillespie J.J."/>
            <person name="Kenyon R.W."/>
            <person name="Lu J."/>
            <person name="Mane S."/>
            <person name="Mohapatra S."/>
            <person name="Nagrani S."/>
            <person name="Purkayastha A."/>
            <person name="Rajasimha H.K."/>
            <person name="Shallom J.M."/>
            <person name="Shallom S."/>
            <person name="Shukla M."/>
            <person name="Snyder E.E."/>
            <person name="Sobral B.W."/>
            <person name="Wattam A.R."/>
            <person name="Will R."/>
            <person name="Williams K."/>
            <person name="Yoo H."/>
            <person name="Bruce D."/>
            <person name="Detter C."/>
            <person name="Munk C."/>
            <person name="Brettin T.S."/>
        </authorList>
    </citation>
    <scope>NUCLEOTIDE SEQUENCE [LARGE SCALE GENOMIC DNA]</scope>
    <source>
        <strain>ATCC 23365 / NCTC 10854 / RM-666</strain>
    </source>
</reference>